<sequence>MKDLPARRLLLVHAHPDDESINNGATMARYAAEGAHVTLVTCTLGEEGEVIPPALARLTADRDDALGPHRVGELAAAMRELGVDDHRFLGGAGRYRDSGMMGAEQNGRPGSFWSTSVDEAAAHLVEVIREVRPQVLVTYDPDGGYGHPDHIQAHRVAMRAADLAADPAYGSDAPHTVAKVYWNRVERAAAEAGFERLRTTAPGAFPGIASVDDVPGVTDREHITAEIDGSAYAGAKSAAMRAHATQIAVDGPFFALSNDLGQPLLTTECYQLVRGVPGVPEGERESDLFAGLPPATDGTGAAGAPSATGAANPADAEGGAA</sequence>
<organism>
    <name type="scientific">Streptomyces griseus subsp. griseus (strain JCM 4626 / CBS 651.72 / NBRC 13350 / KCC S-0626 / ISP 5235)</name>
    <dbReference type="NCBI Taxonomy" id="455632"/>
    <lineage>
        <taxon>Bacteria</taxon>
        <taxon>Bacillati</taxon>
        <taxon>Actinomycetota</taxon>
        <taxon>Actinomycetes</taxon>
        <taxon>Kitasatosporales</taxon>
        <taxon>Streptomycetaceae</taxon>
        <taxon>Streptomyces</taxon>
    </lineage>
</organism>
<evidence type="ECO:0000255" key="1">
    <source>
        <dbReference type="HAMAP-Rule" id="MF_01696"/>
    </source>
</evidence>
<evidence type="ECO:0000256" key="2">
    <source>
        <dbReference type="SAM" id="MobiDB-lite"/>
    </source>
</evidence>
<gene>
    <name evidence="1" type="primary">mshB</name>
    <name type="ordered locus">SGR_2405</name>
</gene>
<proteinExistence type="inferred from homology"/>
<keyword id="KW-0378">Hydrolase</keyword>
<keyword id="KW-0479">Metal-binding</keyword>
<keyword id="KW-0862">Zinc</keyword>
<reference key="1">
    <citation type="journal article" date="2008" name="J. Bacteriol.">
        <title>Genome sequence of the streptomycin-producing microorganism Streptomyces griseus IFO 13350.</title>
        <authorList>
            <person name="Ohnishi Y."/>
            <person name="Ishikawa J."/>
            <person name="Hara H."/>
            <person name="Suzuki H."/>
            <person name="Ikenoya M."/>
            <person name="Ikeda H."/>
            <person name="Yamashita A."/>
            <person name="Hattori M."/>
            <person name="Horinouchi S."/>
        </authorList>
    </citation>
    <scope>NUCLEOTIDE SEQUENCE [LARGE SCALE GENOMIC DNA]</scope>
    <source>
        <strain>JCM 4626 / CBS 651.72 / NBRC 13350 / KCC S-0626 / ISP 5235</strain>
    </source>
</reference>
<protein>
    <recommendedName>
        <fullName evidence="1">1D-myo-inositol 2-acetamido-2-deoxy-alpha-D-glucopyranoside deacetylase</fullName>
        <shortName evidence="1">GlcNAc-Ins deacetylase</shortName>
        <ecNumber evidence="1">3.5.1.103</ecNumber>
    </recommendedName>
    <alternativeName>
        <fullName>N-acetyl-1-D-myo-inositol 2-amino-2-deoxy-alpha-D-glucopyranoside deacetylase</fullName>
    </alternativeName>
</protein>
<dbReference type="EC" id="3.5.1.103" evidence="1"/>
<dbReference type="EMBL" id="AP009493">
    <property type="protein sequence ID" value="BAG19234.1"/>
    <property type="molecule type" value="Genomic_DNA"/>
</dbReference>
<dbReference type="RefSeq" id="WP_012379173.1">
    <property type="nucleotide sequence ID" value="NC_010572.1"/>
</dbReference>
<dbReference type="SMR" id="B1W1K9"/>
<dbReference type="KEGG" id="sgr:SGR_2405"/>
<dbReference type="PATRIC" id="fig|455632.4.peg.2449"/>
<dbReference type="eggNOG" id="COG2120">
    <property type="taxonomic scope" value="Bacteria"/>
</dbReference>
<dbReference type="HOGENOM" id="CLU_049311_2_1_11"/>
<dbReference type="Proteomes" id="UP000001685">
    <property type="component" value="Chromosome"/>
</dbReference>
<dbReference type="GO" id="GO:0035595">
    <property type="term" value="F:N-acetylglucosaminylinositol deacetylase activity"/>
    <property type="evidence" value="ECO:0007669"/>
    <property type="project" value="UniProtKB-EC"/>
</dbReference>
<dbReference type="GO" id="GO:0008270">
    <property type="term" value="F:zinc ion binding"/>
    <property type="evidence" value="ECO:0007669"/>
    <property type="project" value="UniProtKB-UniRule"/>
</dbReference>
<dbReference type="GO" id="GO:0010125">
    <property type="term" value="P:mycothiol biosynthetic process"/>
    <property type="evidence" value="ECO:0007669"/>
    <property type="project" value="UniProtKB-UniRule"/>
</dbReference>
<dbReference type="Gene3D" id="3.40.50.10320">
    <property type="entry name" value="LmbE-like"/>
    <property type="match status" value="1"/>
</dbReference>
<dbReference type="HAMAP" id="MF_01696">
    <property type="entry name" value="MshB"/>
    <property type="match status" value="1"/>
</dbReference>
<dbReference type="InterPro" id="IPR003737">
    <property type="entry name" value="GlcNAc_PI_deacetylase-related"/>
</dbReference>
<dbReference type="InterPro" id="IPR024078">
    <property type="entry name" value="LmbE-like_dom_sf"/>
</dbReference>
<dbReference type="InterPro" id="IPR017810">
    <property type="entry name" value="Mycothiol_biosynthesis_MshB"/>
</dbReference>
<dbReference type="NCBIfam" id="TIGR03445">
    <property type="entry name" value="mycothiol_MshB"/>
    <property type="match status" value="1"/>
</dbReference>
<dbReference type="PANTHER" id="PTHR12993:SF26">
    <property type="entry name" value="1D-MYO-INOSITOL 2-ACETAMIDO-2-DEOXY-ALPHA-D-GLUCOPYRANOSIDE DEACETYLASE"/>
    <property type="match status" value="1"/>
</dbReference>
<dbReference type="PANTHER" id="PTHR12993">
    <property type="entry name" value="N-ACETYLGLUCOSAMINYL-PHOSPHATIDYLINOSITOL DE-N-ACETYLASE-RELATED"/>
    <property type="match status" value="1"/>
</dbReference>
<dbReference type="Pfam" id="PF02585">
    <property type="entry name" value="PIG-L"/>
    <property type="match status" value="1"/>
</dbReference>
<dbReference type="SUPFAM" id="SSF102588">
    <property type="entry name" value="LmbE-like"/>
    <property type="match status" value="1"/>
</dbReference>
<feature type="chain" id="PRO_0000400227" description="1D-myo-inositol 2-acetamido-2-deoxy-alpha-D-glucopyranoside deacetylase">
    <location>
        <begin position="1"/>
        <end position="321"/>
    </location>
</feature>
<feature type="region of interest" description="Disordered" evidence="2">
    <location>
        <begin position="280"/>
        <end position="321"/>
    </location>
</feature>
<feature type="compositionally biased region" description="Low complexity" evidence="2">
    <location>
        <begin position="290"/>
        <end position="321"/>
    </location>
</feature>
<feature type="binding site" evidence="1">
    <location>
        <position position="15"/>
    </location>
    <ligand>
        <name>Zn(2+)</name>
        <dbReference type="ChEBI" id="CHEBI:29105"/>
    </ligand>
</feature>
<feature type="binding site" evidence="1">
    <location>
        <position position="18"/>
    </location>
    <ligand>
        <name>Zn(2+)</name>
        <dbReference type="ChEBI" id="CHEBI:29105"/>
    </ligand>
</feature>
<feature type="binding site" evidence="1">
    <location>
        <position position="150"/>
    </location>
    <ligand>
        <name>Zn(2+)</name>
        <dbReference type="ChEBI" id="CHEBI:29105"/>
    </ligand>
</feature>
<name>MSHB_STRGG</name>
<comment type="function">
    <text evidence="1">Catalyzes the deacetylation of 1D-myo-inositol 2-acetamido-2-deoxy-alpha-D-glucopyranoside (GlcNAc-Ins) in the mycothiol biosynthesis pathway.</text>
</comment>
<comment type="catalytic activity">
    <reaction evidence="1">
        <text>1D-myo-inositol 2-acetamido-2-deoxy-alpha-D-glucopyranoside + H2O = 1D-myo-inositol 2-amino-2-deoxy-alpha-D-glucopyranoside + acetate</text>
        <dbReference type="Rhea" id="RHEA:26180"/>
        <dbReference type="ChEBI" id="CHEBI:15377"/>
        <dbReference type="ChEBI" id="CHEBI:30089"/>
        <dbReference type="ChEBI" id="CHEBI:52442"/>
        <dbReference type="ChEBI" id="CHEBI:58886"/>
        <dbReference type="EC" id="3.5.1.103"/>
    </reaction>
</comment>
<comment type="cofactor">
    <cofactor evidence="1">
        <name>Zn(2+)</name>
        <dbReference type="ChEBI" id="CHEBI:29105"/>
    </cofactor>
    <text evidence="1">Binds 1 zinc ion per subunit.</text>
</comment>
<comment type="similarity">
    <text evidence="1">Belongs to the MshB deacetylase family.</text>
</comment>
<accession>B1W1K9</accession>